<keyword id="KW-0963">Cytoplasm</keyword>
<keyword id="KW-0227">DNA damage</keyword>
<keyword id="KW-0228">DNA excision</keyword>
<keyword id="KW-0234">DNA repair</keyword>
<keyword id="KW-0267">Excision nuclease</keyword>
<keyword id="KW-1185">Reference proteome</keyword>
<keyword id="KW-0742">SOS response</keyword>
<gene>
    <name evidence="1" type="primary">uvrC</name>
    <name type="ordered locus">sync_1361</name>
</gene>
<proteinExistence type="inferred from homology"/>
<comment type="function">
    <text evidence="1">The UvrABC repair system catalyzes the recognition and processing of DNA lesions. UvrC both incises the 5' and 3' sides of the lesion. The N-terminal half is responsible for the 3' incision and the C-terminal half is responsible for the 5' incision.</text>
</comment>
<comment type="subunit">
    <text evidence="1">Interacts with UvrB in an incision complex.</text>
</comment>
<comment type="subcellular location">
    <subcellularLocation>
        <location evidence="1">Cytoplasm</location>
    </subcellularLocation>
</comment>
<comment type="similarity">
    <text evidence="1">Belongs to the UvrC family.</text>
</comment>
<protein>
    <recommendedName>
        <fullName evidence="1">UvrABC system protein C</fullName>
        <shortName evidence="1">Protein UvrC</shortName>
    </recommendedName>
    <alternativeName>
        <fullName evidence="1">Excinuclease ABC subunit C</fullName>
    </alternativeName>
</protein>
<accession>Q0IAF4</accession>
<feature type="chain" id="PRO_0000264962" description="UvrABC system protein C">
    <location>
        <begin position="1"/>
        <end position="651"/>
    </location>
</feature>
<feature type="domain" description="GIY-YIG" evidence="1">
    <location>
        <begin position="21"/>
        <end position="100"/>
    </location>
</feature>
<feature type="domain" description="UVR" evidence="1">
    <location>
        <begin position="210"/>
        <end position="245"/>
    </location>
</feature>
<organism>
    <name type="scientific">Synechococcus sp. (strain CC9311)</name>
    <dbReference type="NCBI Taxonomy" id="64471"/>
    <lineage>
        <taxon>Bacteria</taxon>
        <taxon>Bacillati</taxon>
        <taxon>Cyanobacteriota</taxon>
        <taxon>Cyanophyceae</taxon>
        <taxon>Synechococcales</taxon>
        <taxon>Synechococcaceae</taxon>
        <taxon>Synechococcus</taxon>
    </lineage>
</organism>
<evidence type="ECO:0000255" key="1">
    <source>
        <dbReference type="HAMAP-Rule" id="MF_00203"/>
    </source>
</evidence>
<sequence length="651" mass="75225">MQRPLLEQPERLEQRLKDIPTEPGCYLMRDADDRLLYVGKSKTLRSRVRSYFRSSHDLSPRIRLMVRQICEIEFIVTDSEAEALALESNLIKNQQPHFNVLLKDDKKYPYLCITWSEDYPRIFITRRRRFRSPLDRFYGPYVDVGLLRRTLFLVKRVFPLRQRPRPLYPNRTCLNYSIGRCPGVCQEKVSSEDYHQILRKVAMVFQGRSDELRQLLNQQMERYAERLDFESAARIRDQLQGIDQLTADQKMSLPDASVSRDVLAVAQDDHFAAIQLFQMRAGKLVGRLGFAADATDLQAGLILQRVIEEHYSQVDAVEIPPEVLVQHELPQQRLIAEWLSEQRERKVQVLHPQRRQKADLIDLVMRNAEFELGRARQSQEQQALANEDLAQLLELATPPRRIEGYDISHIQGSDAVASQVVFIDGLPAKQHYRRYKIQSSSIQAGHSDDFMAMAEIMRRRFRKWARVKAEGADLDQVRRQSSSSLNMDGLHDWPDVVMIDGGKGQLSAVMEALRELDLHEDLVVCSLAKQREEIFLPEAKQPLESEPDQLGVSLLRRLRDEAHRFAVTFHRQQRGQRMKRSRLSDIPGLGPKRVRDLLAHFQSIDAIQLASVDQLHQAPGVGLSLAKQIRAYFHPQEMDEDNMAMAGEDMA</sequence>
<reference key="1">
    <citation type="journal article" date="2006" name="Proc. Natl. Acad. Sci. U.S.A.">
        <title>Genome sequence of Synechococcus CC9311: insights into adaptation to a coastal environment.</title>
        <authorList>
            <person name="Palenik B."/>
            <person name="Ren Q."/>
            <person name="Dupont C.L."/>
            <person name="Myers G.S."/>
            <person name="Heidelberg J.F."/>
            <person name="Badger J.H."/>
            <person name="Madupu R."/>
            <person name="Nelson W.C."/>
            <person name="Brinkac L.M."/>
            <person name="Dodson R.J."/>
            <person name="Durkin A.S."/>
            <person name="Daugherty S.C."/>
            <person name="Sullivan S.A."/>
            <person name="Khouri H."/>
            <person name="Mohamoud Y."/>
            <person name="Halpin R."/>
            <person name="Paulsen I.T."/>
        </authorList>
    </citation>
    <scope>NUCLEOTIDE SEQUENCE [LARGE SCALE GENOMIC DNA]</scope>
    <source>
        <strain>CC9311</strain>
    </source>
</reference>
<name>UVRC_SYNS3</name>
<dbReference type="EMBL" id="CP000435">
    <property type="protein sequence ID" value="ABI46587.1"/>
    <property type="molecule type" value="Genomic_DNA"/>
</dbReference>
<dbReference type="RefSeq" id="WP_011619286.1">
    <property type="nucleotide sequence ID" value="NC_008319.1"/>
</dbReference>
<dbReference type="SMR" id="Q0IAF4"/>
<dbReference type="STRING" id="64471.sync_1361"/>
<dbReference type="KEGG" id="syg:sync_1361"/>
<dbReference type="eggNOG" id="COG0322">
    <property type="taxonomic scope" value="Bacteria"/>
</dbReference>
<dbReference type="HOGENOM" id="CLU_014841_3_2_3"/>
<dbReference type="OrthoDB" id="9804933at2"/>
<dbReference type="Proteomes" id="UP000001961">
    <property type="component" value="Chromosome"/>
</dbReference>
<dbReference type="GO" id="GO:0005737">
    <property type="term" value="C:cytoplasm"/>
    <property type="evidence" value="ECO:0007669"/>
    <property type="project" value="UniProtKB-SubCell"/>
</dbReference>
<dbReference type="GO" id="GO:0009380">
    <property type="term" value="C:excinuclease repair complex"/>
    <property type="evidence" value="ECO:0007669"/>
    <property type="project" value="InterPro"/>
</dbReference>
<dbReference type="GO" id="GO:0003677">
    <property type="term" value="F:DNA binding"/>
    <property type="evidence" value="ECO:0007669"/>
    <property type="project" value="UniProtKB-UniRule"/>
</dbReference>
<dbReference type="GO" id="GO:0009381">
    <property type="term" value="F:excinuclease ABC activity"/>
    <property type="evidence" value="ECO:0007669"/>
    <property type="project" value="UniProtKB-UniRule"/>
</dbReference>
<dbReference type="GO" id="GO:0006289">
    <property type="term" value="P:nucleotide-excision repair"/>
    <property type="evidence" value="ECO:0007669"/>
    <property type="project" value="UniProtKB-UniRule"/>
</dbReference>
<dbReference type="GO" id="GO:0009432">
    <property type="term" value="P:SOS response"/>
    <property type="evidence" value="ECO:0007669"/>
    <property type="project" value="UniProtKB-UniRule"/>
</dbReference>
<dbReference type="CDD" id="cd10434">
    <property type="entry name" value="GIY-YIG_UvrC_Cho"/>
    <property type="match status" value="1"/>
</dbReference>
<dbReference type="FunFam" id="3.40.1440.10:FF:000001">
    <property type="entry name" value="UvrABC system protein C"/>
    <property type="match status" value="1"/>
</dbReference>
<dbReference type="Gene3D" id="1.10.150.20">
    <property type="entry name" value="5' to 3' exonuclease, C-terminal subdomain"/>
    <property type="match status" value="1"/>
</dbReference>
<dbReference type="Gene3D" id="3.40.1440.10">
    <property type="entry name" value="GIY-YIG endonuclease"/>
    <property type="match status" value="1"/>
</dbReference>
<dbReference type="Gene3D" id="4.10.860.10">
    <property type="entry name" value="UVR domain"/>
    <property type="match status" value="1"/>
</dbReference>
<dbReference type="Gene3D" id="3.30.420.340">
    <property type="entry name" value="UvrC, RNAse H endonuclease domain"/>
    <property type="match status" value="1"/>
</dbReference>
<dbReference type="HAMAP" id="MF_00203">
    <property type="entry name" value="UvrC"/>
    <property type="match status" value="1"/>
</dbReference>
<dbReference type="InterPro" id="IPR000305">
    <property type="entry name" value="GIY-YIG_endonuc"/>
</dbReference>
<dbReference type="InterPro" id="IPR035901">
    <property type="entry name" value="GIY-YIG_endonuc_sf"/>
</dbReference>
<dbReference type="InterPro" id="IPR047296">
    <property type="entry name" value="GIY-YIG_UvrC_Cho"/>
</dbReference>
<dbReference type="InterPro" id="IPR003583">
    <property type="entry name" value="Hlx-hairpin-Hlx_DNA-bd_motif"/>
</dbReference>
<dbReference type="InterPro" id="IPR010994">
    <property type="entry name" value="RuvA_2-like"/>
</dbReference>
<dbReference type="InterPro" id="IPR001943">
    <property type="entry name" value="UVR_dom"/>
</dbReference>
<dbReference type="InterPro" id="IPR036876">
    <property type="entry name" value="UVR_dom_sf"/>
</dbReference>
<dbReference type="InterPro" id="IPR050066">
    <property type="entry name" value="UvrABC_protein_C"/>
</dbReference>
<dbReference type="InterPro" id="IPR004791">
    <property type="entry name" value="UvrC"/>
</dbReference>
<dbReference type="InterPro" id="IPR001162">
    <property type="entry name" value="UvrC_RNase_H_dom"/>
</dbReference>
<dbReference type="InterPro" id="IPR038476">
    <property type="entry name" value="UvrC_RNase_H_dom_sf"/>
</dbReference>
<dbReference type="NCBIfam" id="NF001824">
    <property type="entry name" value="PRK00558.1-5"/>
    <property type="match status" value="1"/>
</dbReference>
<dbReference type="NCBIfam" id="TIGR00194">
    <property type="entry name" value="uvrC"/>
    <property type="match status" value="1"/>
</dbReference>
<dbReference type="PANTHER" id="PTHR30562:SF1">
    <property type="entry name" value="UVRABC SYSTEM PROTEIN C"/>
    <property type="match status" value="1"/>
</dbReference>
<dbReference type="PANTHER" id="PTHR30562">
    <property type="entry name" value="UVRC/OXIDOREDUCTASE"/>
    <property type="match status" value="1"/>
</dbReference>
<dbReference type="Pfam" id="PF01541">
    <property type="entry name" value="GIY-YIG"/>
    <property type="match status" value="1"/>
</dbReference>
<dbReference type="Pfam" id="PF14520">
    <property type="entry name" value="HHH_5"/>
    <property type="match status" value="1"/>
</dbReference>
<dbReference type="Pfam" id="PF02151">
    <property type="entry name" value="UVR"/>
    <property type="match status" value="1"/>
</dbReference>
<dbReference type="Pfam" id="PF22920">
    <property type="entry name" value="UvrC_RNaseH"/>
    <property type="match status" value="1"/>
</dbReference>
<dbReference type="Pfam" id="PF08459">
    <property type="entry name" value="UvrC_RNaseH_dom"/>
    <property type="match status" value="1"/>
</dbReference>
<dbReference type="SMART" id="SM00465">
    <property type="entry name" value="GIYc"/>
    <property type="match status" value="1"/>
</dbReference>
<dbReference type="SMART" id="SM00278">
    <property type="entry name" value="HhH1"/>
    <property type="match status" value="2"/>
</dbReference>
<dbReference type="SUPFAM" id="SSF46600">
    <property type="entry name" value="C-terminal UvrC-binding domain of UvrB"/>
    <property type="match status" value="1"/>
</dbReference>
<dbReference type="SUPFAM" id="SSF82771">
    <property type="entry name" value="GIY-YIG endonuclease"/>
    <property type="match status" value="1"/>
</dbReference>
<dbReference type="SUPFAM" id="SSF47781">
    <property type="entry name" value="RuvA domain 2-like"/>
    <property type="match status" value="1"/>
</dbReference>
<dbReference type="PROSITE" id="PS50164">
    <property type="entry name" value="GIY_YIG"/>
    <property type="match status" value="1"/>
</dbReference>
<dbReference type="PROSITE" id="PS50151">
    <property type="entry name" value="UVR"/>
    <property type="match status" value="1"/>
</dbReference>
<dbReference type="PROSITE" id="PS50165">
    <property type="entry name" value="UVRC"/>
    <property type="match status" value="1"/>
</dbReference>